<feature type="chain" id="PRO_0000333531" description="GDP-mannose transporter">
    <location>
        <begin position="1"/>
        <end position="392"/>
    </location>
</feature>
<feature type="topological domain" description="Cytoplasmic" evidence="1">
    <location>
        <begin position="1"/>
        <end position="55"/>
    </location>
</feature>
<feature type="transmembrane region" description="Helical" evidence="2">
    <location>
        <begin position="56"/>
        <end position="76"/>
    </location>
</feature>
<feature type="topological domain" description="Lumenal" evidence="1">
    <location>
        <begin position="77"/>
        <end position="80"/>
    </location>
</feature>
<feature type="transmembrane region" description="Helical" evidence="2">
    <location>
        <begin position="81"/>
        <end position="101"/>
    </location>
</feature>
<feature type="topological domain" description="Cytoplasmic" evidence="1">
    <location>
        <begin position="102"/>
        <end position="121"/>
    </location>
</feature>
<feature type="transmembrane region" description="Helical" evidence="2">
    <location>
        <begin position="122"/>
        <end position="144"/>
    </location>
</feature>
<feature type="topological domain" description="Lumenal" evidence="1">
    <location>
        <begin position="145"/>
        <end position="149"/>
    </location>
</feature>
<feature type="transmembrane region" description="Helical" evidence="2">
    <location>
        <begin position="150"/>
        <end position="168"/>
    </location>
</feature>
<feature type="topological domain" description="Cytoplasmic" evidence="1">
    <location>
        <begin position="169"/>
        <end position="174"/>
    </location>
</feature>
<feature type="transmembrane region" description="Helical" evidence="2">
    <location>
        <begin position="175"/>
        <end position="198"/>
    </location>
</feature>
<feature type="topological domain" description="Lumenal" evidence="1">
    <location>
        <begin position="199"/>
        <end position="213"/>
    </location>
</feature>
<feature type="transmembrane region" description="Helical" evidence="2">
    <location>
        <begin position="214"/>
        <end position="234"/>
    </location>
</feature>
<feature type="topological domain" description="Cytoplasmic" evidence="1">
    <location>
        <begin position="235"/>
        <end position="248"/>
    </location>
</feature>
<feature type="transmembrane region" description="Helical" evidence="2">
    <location>
        <begin position="249"/>
        <end position="269"/>
    </location>
</feature>
<feature type="topological domain" description="Lumenal" evidence="1">
    <location>
        <begin position="270"/>
        <end position="287"/>
    </location>
</feature>
<feature type="transmembrane region" description="Helical" evidence="2">
    <location>
        <begin position="288"/>
        <end position="308"/>
    </location>
</feature>
<feature type="topological domain" description="Cytoplasmic" evidence="1">
    <location>
        <begin position="309"/>
        <end position="316"/>
    </location>
</feature>
<feature type="transmembrane region" description="Helical" evidence="2">
    <location>
        <begin position="317"/>
        <end position="337"/>
    </location>
</feature>
<feature type="topological domain" description="Lumenal" evidence="1">
    <location>
        <begin position="338"/>
        <end position="342"/>
    </location>
</feature>
<feature type="transmembrane region" description="Helical" evidence="2">
    <location>
        <begin position="343"/>
        <end position="361"/>
    </location>
</feature>
<feature type="topological domain" description="Cytoplasmic" evidence="1">
    <location>
        <begin position="362"/>
        <end position="392"/>
    </location>
</feature>
<feature type="region of interest" description="Disordered" evidence="3">
    <location>
        <begin position="1"/>
        <end position="40"/>
    </location>
</feature>
<feature type="compositionally biased region" description="Polar residues" evidence="3">
    <location>
        <begin position="29"/>
        <end position="38"/>
    </location>
</feature>
<gene>
    <name type="primary">vrg-4</name>
    <name type="ORF">NCU06198</name>
</gene>
<keyword id="KW-0968">Cytoplasmic vesicle</keyword>
<keyword id="KW-0256">Endoplasmic reticulum</keyword>
<keyword id="KW-0333">Golgi apparatus</keyword>
<keyword id="KW-0472">Membrane</keyword>
<keyword id="KW-1185">Reference proteome</keyword>
<keyword id="KW-0762">Sugar transport</keyword>
<keyword id="KW-0812">Transmembrane</keyword>
<keyword id="KW-1133">Transmembrane helix</keyword>
<keyword id="KW-0813">Transport</keyword>
<reference key="1">
    <citation type="journal article" date="2003" name="Nature">
        <title>The genome sequence of the filamentous fungus Neurospora crassa.</title>
        <authorList>
            <person name="Galagan J.E."/>
            <person name="Calvo S.E."/>
            <person name="Borkovich K.A."/>
            <person name="Selker E.U."/>
            <person name="Read N.D."/>
            <person name="Jaffe D.B."/>
            <person name="FitzHugh W."/>
            <person name="Ma L.-J."/>
            <person name="Smirnov S."/>
            <person name="Purcell S."/>
            <person name="Rehman B."/>
            <person name="Elkins T."/>
            <person name="Engels R."/>
            <person name="Wang S."/>
            <person name="Nielsen C.B."/>
            <person name="Butler J."/>
            <person name="Endrizzi M."/>
            <person name="Qui D."/>
            <person name="Ianakiev P."/>
            <person name="Bell-Pedersen D."/>
            <person name="Nelson M.A."/>
            <person name="Werner-Washburne M."/>
            <person name="Selitrennikoff C.P."/>
            <person name="Kinsey J.A."/>
            <person name="Braun E.L."/>
            <person name="Zelter A."/>
            <person name="Schulte U."/>
            <person name="Kothe G.O."/>
            <person name="Jedd G."/>
            <person name="Mewes H.-W."/>
            <person name="Staben C."/>
            <person name="Marcotte E."/>
            <person name="Greenberg D."/>
            <person name="Roy A."/>
            <person name="Foley K."/>
            <person name="Naylor J."/>
            <person name="Stange-Thomann N."/>
            <person name="Barrett R."/>
            <person name="Gnerre S."/>
            <person name="Kamal M."/>
            <person name="Kamvysselis M."/>
            <person name="Mauceli E.W."/>
            <person name="Bielke C."/>
            <person name="Rudd S."/>
            <person name="Frishman D."/>
            <person name="Krystofova S."/>
            <person name="Rasmussen C."/>
            <person name="Metzenberg R.L."/>
            <person name="Perkins D.D."/>
            <person name="Kroken S."/>
            <person name="Cogoni C."/>
            <person name="Macino G."/>
            <person name="Catcheside D.E.A."/>
            <person name="Li W."/>
            <person name="Pratt R.J."/>
            <person name="Osmani S.A."/>
            <person name="DeSouza C.P.C."/>
            <person name="Glass N.L."/>
            <person name="Orbach M.J."/>
            <person name="Berglund J.A."/>
            <person name="Voelker R."/>
            <person name="Yarden O."/>
            <person name="Plamann M."/>
            <person name="Seiler S."/>
            <person name="Dunlap J.C."/>
            <person name="Radford A."/>
            <person name="Aramayo R."/>
            <person name="Natvig D.O."/>
            <person name="Alex L.A."/>
            <person name="Mannhaupt G."/>
            <person name="Ebbole D.J."/>
            <person name="Freitag M."/>
            <person name="Paulsen I."/>
            <person name="Sachs M.S."/>
            <person name="Lander E.S."/>
            <person name="Nusbaum C."/>
            <person name="Birren B.W."/>
        </authorList>
    </citation>
    <scope>NUCLEOTIDE SEQUENCE [LARGE SCALE GENOMIC DNA]</scope>
    <source>
        <strain>ATCC 24698 / 74-OR23-1A / CBS 708.71 / DSM 1257 / FGSC 987</strain>
    </source>
</reference>
<protein>
    <recommendedName>
        <fullName>GDP-mannose transporter</fullName>
        <shortName>GMT</shortName>
    </recommendedName>
</protein>
<name>GMT_NEUCR</name>
<accession>Q7SBC5</accession>
<sequence length="392" mass="42749">MANKRNEDIELGPAEGRGSTDKDPFLARRSSSQPNRPQQAGPFGGYFDKIDHSPGASIIAYCLSSISMTVVNKYVVSGSEWNLNFFYLAVQSLVCTAAILICKQLGMFQNLAAFDSTKAKKWFPISLLLVGMIYTSTKALQFLSVPVYTIFKNLTIIVVAYGEVLWFGGSVTPMALLSFGLMVLSSVIAAWADIQAAVEGVGHTAEATDAISTLNAGYAWMGMNVFCTAAYLLGMRKVIKKMNFKDYDTMFYNNLLTIPVLIVFSLLFEDWSNDNLIKNFPVETRNSLFIGMIYSGLAAIFISYCSAWCIRVTSSTTYSMVGALNKLPLAISGLIFFDAPVTFGSVTAIFVGFVSGLVYTWSKTRQKVSQILPTTQPTMSASAASNRDAANA</sequence>
<proteinExistence type="inferred from homology"/>
<organism>
    <name type="scientific">Neurospora crassa (strain ATCC 24698 / 74-OR23-1A / CBS 708.71 / DSM 1257 / FGSC 987)</name>
    <dbReference type="NCBI Taxonomy" id="367110"/>
    <lineage>
        <taxon>Eukaryota</taxon>
        <taxon>Fungi</taxon>
        <taxon>Dikarya</taxon>
        <taxon>Ascomycota</taxon>
        <taxon>Pezizomycotina</taxon>
        <taxon>Sordariomycetes</taxon>
        <taxon>Sordariomycetidae</taxon>
        <taxon>Sordariales</taxon>
        <taxon>Sordariaceae</taxon>
        <taxon>Neurospora</taxon>
    </lineage>
</organism>
<comment type="function">
    <text evidence="1">Involved in the import of GDP-mannose from the cytoplasm into the Golgi lumen.</text>
</comment>
<comment type="subunit">
    <text evidence="1">Homooligomer.</text>
</comment>
<comment type="subcellular location">
    <subcellularLocation>
        <location evidence="1">Golgi apparatus membrane</location>
        <topology evidence="1">Multi-pass membrane protein</topology>
    </subcellularLocation>
    <subcellularLocation>
        <location evidence="1">Cytoplasmic vesicle membrane</location>
        <topology evidence="1">Multi-pass membrane protein</topology>
    </subcellularLocation>
    <subcellularLocation>
        <location evidence="1">Endoplasmic reticulum membrane</location>
        <topology evidence="1">Multi-pass membrane protein</topology>
    </subcellularLocation>
</comment>
<comment type="similarity">
    <text evidence="4">Belongs to the TPT transporter family. SLC35D subfamily.</text>
</comment>
<dbReference type="EMBL" id="CM002238">
    <property type="protein sequence ID" value="EAA33678.1"/>
    <property type="molecule type" value="Genomic_DNA"/>
</dbReference>
<dbReference type="RefSeq" id="XP_962914.1">
    <property type="nucleotide sequence ID" value="XM_957821.2"/>
</dbReference>
<dbReference type="SMR" id="Q7SBC5"/>
<dbReference type="FunCoup" id="Q7SBC5">
    <property type="interactions" value="561"/>
</dbReference>
<dbReference type="STRING" id="367110.Q7SBC5"/>
<dbReference type="PaxDb" id="5141-EFNCRP00000006017"/>
<dbReference type="EnsemblFungi" id="EAA33678">
    <property type="protein sequence ID" value="EAA33678"/>
    <property type="gene ID" value="NCU06198"/>
</dbReference>
<dbReference type="GeneID" id="3879062"/>
<dbReference type="KEGG" id="ncr:NCU06198"/>
<dbReference type="VEuPathDB" id="FungiDB:NCU06198"/>
<dbReference type="HOGENOM" id="CLU_025360_1_2_1"/>
<dbReference type="InParanoid" id="Q7SBC5"/>
<dbReference type="OMA" id="VWMLINC"/>
<dbReference type="OrthoDB" id="417037at2759"/>
<dbReference type="Proteomes" id="UP000001805">
    <property type="component" value="Chromosome 3, Linkage Group III"/>
</dbReference>
<dbReference type="GO" id="GO:0030659">
    <property type="term" value="C:cytoplasmic vesicle membrane"/>
    <property type="evidence" value="ECO:0007669"/>
    <property type="project" value="UniProtKB-SubCell"/>
</dbReference>
<dbReference type="GO" id="GO:0005789">
    <property type="term" value="C:endoplasmic reticulum membrane"/>
    <property type="evidence" value="ECO:0007669"/>
    <property type="project" value="UniProtKB-SubCell"/>
</dbReference>
<dbReference type="GO" id="GO:0005794">
    <property type="term" value="C:Golgi apparatus"/>
    <property type="evidence" value="ECO:0000318"/>
    <property type="project" value="GO_Central"/>
</dbReference>
<dbReference type="GO" id="GO:0000139">
    <property type="term" value="C:Golgi membrane"/>
    <property type="evidence" value="ECO:0007669"/>
    <property type="project" value="UniProtKB-SubCell"/>
</dbReference>
<dbReference type="GO" id="GO:0015297">
    <property type="term" value="F:antiporter activity"/>
    <property type="evidence" value="ECO:0000318"/>
    <property type="project" value="GO_Central"/>
</dbReference>
<dbReference type="GO" id="GO:0005458">
    <property type="term" value="F:GDP-mannose transmembrane transporter activity"/>
    <property type="evidence" value="ECO:0000318"/>
    <property type="project" value="GO_Central"/>
</dbReference>
<dbReference type="GO" id="GO:1990570">
    <property type="term" value="P:GDP-mannose transmembrane transport"/>
    <property type="evidence" value="ECO:0000318"/>
    <property type="project" value="GO_Central"/>
</dbReference>
<dbReference type="InterPro" id="IPR050186">
    <property type="entry name" value="TPT_transporter"/>
</dbReference>
<dbReference type="NCBIfam" id="TIGR00803">
    <property type="entry name" value="nst"/>
    <property type="match status" value="1"/>
</dbReference>
<dbReference type="PANTHER" id="PTHR11132">
    <property type="entry name" value="SOLUTE CARRIER FAMILY 35"/>
    <property type="match status" value="1"/>
</dbReference>
<dbReference type="SUPFAM" id="SSF103481">
    <property type="entry name" value="Multidrug resistance efflux transporter EmrE"/>
    <property type="match status" value="1"/>
</dbReference>
<evidence type="ECO:0000250" key="1"/>
<evidence type="ECO:0000255" key="2"/>
<evidence type="ECO:0000256" key="3">
    <source>
        <dbReference type="SAM" id="MobiDB-lite"/>
    </source>
</evidence>
<evidence type="ECO:0000305" key="4"/>